<dbReference type="EC" id="4.1.99.22" evidence="1"/>
<dbReference type="EMBL" id="CP000911">
    <property type="protein sequence ID" value="ABY38060.1"/>
    <property type="molecule type" value="Genomic_DNA"/>
</dbReference>
<dbReference type="RefSeq" id="WP_004689666.1">
    <property type="nucleotide sequence ID" value="NC_010169.1"/>
</dbReference>
<dbReference type="SMR" id="B0CLT0"/>
<dbReference type="GeneID" id="55590656"/>
<dbReference type="KEGG" id="bmt:BSUIS_A0998"/>
<dbReference type="HOGENOM" id="CLU_009273_0_1_5"/>
<dbReference type="UniPathway" id="UPA00344"/>
<dbReference type="Proteomes" id="UP000008545">
    <property type="component" value="Chromosome I"/>
</dbReference>
<dbReference type="GO" id="GO:0051539">
    <property type="term" value="F:4 iron, 4 sulfur cluster binding"/>
    <property type="evidence" value="ECO:0007669"/>
    <property type="project" value="UniProtKB-UniRule"/>
</dbReference>
<dbReference type="GO" id="GO:0061799">
    <property type="term" value="F:cyclic pyranopterin monophosphate synthase activity"/>
    <property type="evidence" value="ECO:0007669"/>
    <property type="project" value="TreeGrafter"/>
</dbReference>
<dbReference type="GO" id="GO:0061798">
    <property type="term" value="F:GTP 3',8'-cyclase activity"/>
    <property type="evidence" value="ECO:0007669"/>
    <property type="project" value="UniProtKB-UniRule"/>
</dbReference>
<dbReference type="GO" id="GO:0005525">
    <property type="term" value="F:GTP binding"/>
    <property type="evidence" value="ECO:0007669"/>
    <property type="project" value="UniProtKB-UniRule"/>
</dbReference>
<dbReference type="GO" id="GO:0046872">
    <property type="term" value="F:metal ion binding"/>
    <property type="evidence" value="ECO:0007669"/>
    <property type="project" value="UniProtKB-KW"/>
</dbReference>
<dbReference type="GO" id="GO:1904047">
    <property type="term" value="F:S-adenosyl-L-methionine binding"/>
    <property type="evidence" value="ECO:0007669"/>
    <property type="project" value="UniProtKB-UniRule"/>
</dbReference>
<dbReference type="GO" id="GO:0006777">
    <property type="term" value="P:Mo-molybdopterin cofactor biosynthetic process"/>
    <property type="evidence" value="ECO:0007669"/>
    <property type="project" value="UniProtKB-UniRule"/>
</dbReference>
<dbReference type="CDD" id="cd01335">
    <property type="entry name" value="Radical_SAM"/>
    <property type="match status" value="1"/>
</dbReference>
<dbReference type="CDD" id="cd21117">
    <property type="entry name" value="Twitch_MoaA"/>
    <property type="match status" value="1"/>
</dbReference>
<dbReference type="Gene3D" id="3.20.20.70">
    <property type="entry name" value="Aldolase class I"/>
    <property type="match status" value="1"/>
</dbReference>
<dbReference type="HAMAP" id="MF_01225_B">
    <property type="entry name" value="MoaA_B"/>
    <property type="match status" value="1"/>
</dbReference>
<dbReference type="InterPro" id="IPR013785">
    <property type="entry name" value="Aldolase_TIM"/>
</dbReference>
<dbReference type="InterPro" id="IPR006638">
    <property type="entry name" value="Elp3/MiaA/NifB-like_rSAM"/>
</dbReference>
<dbReference type="InterPro" id="IPR013483">
    <property type="entry name" value="MoaA"/>
</dbReference>
<dbReference type="InterPro" id="IPR000385">
    <property type="entry name" value="MoaA_NifB_PqqE_Fe-S-bd_CS"/>
</dbReference>
<dbReference type="InterPro" id="IPR010505">
    <property type="entry name" value="MoaA_twitch"/>
</dbReference>
<dbReference type="InterPro" id="IPR050105">
    <property type="entry name" value="MoCo_biosynth_MoaA/MoaC"/>
</dbReference>
<dbReference type="InterPro" id="IPR007197">
    <property type="entry name" value="rSAM"/>
</dbReference>
<dbReference type="NCBIfam" id="TIGR02666">
    <property type="entry name" value="moaA"/>
    <property type="match status" value="1"/>
</dbReference>
<dbReference type="PANTHER" id="PTHR22960:SF0">
    <property type="entry name" value="MOLYBDENUM COFACTOR BIOSYNTHESIS PROTEIN 1"/>
    <property type="match status" value="1"/>
</dbReference>
<dbReference type="PANTHER" id="PTHR22960">
    <property type="entry name" value="MOLYBDOPTERIN COFACTOR SYNTHESIS PROTEIN A"/>
    <property type="match status" value="1"/>
</dbReference>
<dbReference type="Pfam" id="PF13353">
    <property type="entry name" value="Fer4_12"/>
    <property type="match status" value="1"/>
</dbReference>
<dbReference type="Pfam" id="PF06463">
    <property type="entry name" value="Mob_synth_C"/>
    <property type="match status" value="1"/>
</dbReference>
<dbReference type="Pfam" id="PF04055">
    <property type="entry name" value="Radical_SAM"/>
    <property type="match status" value="1"/>
</dbReference>
<dbReference type="SFLD" id="SFLDG01383">
    <property type="entry name" value="cyclic_pyranopterin_phosphate"/>
    <property type="match status" value="1"/>
</dbReference>
<dbReference type="SFLD" id="SFLDG01386">
    <property type="entry name" value="main_SPASM_domain-containing"/>
    <property type="match status" value="1"/>
</dbReference>
<dbReference type="SMART" id="SM00729">
    <property type="entry name" value="Elp3"/>
    <property type="match status" value="1"/>
</dbReference>
<dbReference type="SUPFAM" id="SSF102114">
    <property type="entry name" value="Radical SAM enzymes"/>
    <property type="match status" value="1"/>
</dbReference>
<dbReference type="PROSITE" id="PS01305">
    <property type="entry name" value="MOAA_NIFB_PQQE"/>
    <property type="match status" value="1"/>
</dbReference>
<dbReference type="PROSITE" id="PS51918">
    <property type="entry name" value="RADICAL_SAM"/>
    <property type="match status" value="1"/>
</dbReference>
<accession>B0CLT0</accession>
<evidence type="ECO:0000255" key="1">
    <source>
        <dbReference type="HAMAP-Rule" id="MF_01225"/>
    </source>
</evidence>
<evidence type="ECO:0000255" key="2">
    <source>
        <dbReference type="PROSITE-ProRule" id="PRU01266"/>
    </source>
</evidence>
<gene>
    <name evidence="1" type="primary">moaA</name>
    <name type="ordered locus">BSUIS_A0998</name>
</gene>
<proteinExistence type="inferred from homology"/>
<reference key="1">
    <citation type="submission" date="2007-12" db="EMBL/GenBank/DDBJ databases">
        <title>Brucella suis ATCC 23445 whole genome shotgun sequencing project.</title>
        <authorList>
            <person name="Setubal J.C."/>
            <person name="Bowns C."/>
            <person name="Boyle S."/>
            <person name="Crasta O.R."/>
            <person name="Czar M.J."/>
            <person name="Dharmanolla C."/>
            <person name="Gillespie J.J."/>
            <person name="Kenyon R.W."/>
            <person name="Lu J."/>
            <person name="Mane S."/>
            <person name="Mohapatra S."/>
            <person name="Nagrani S."/>
            <person name="Purkayastha A."/>
            <person name="Rajasimha H.K."/>
            <person name="Shallom J.M."/>
            <person name="Shallom S."/>
            <person name="Shukla M."/>
            <person name="Snyder E.E."/>
            <person name="Sobral B.W."/>
            <person name="Wattam A.R."/>
            <person name="Will R."/>
            <person name="Williams K."/>
            <person name="Yoo H."/>
            <person name="Bruce D."/>
            <person name="Detter C."/>
            <person name="Munk C."/>
            <person name="Brettin T.S."/>
        </authorList>
    </citation>
    <scope>NUCLEOTIDE SEQUENCE [LARGE SCALE GENOMIC DNA]</scope>
    <source>
        <strain>ATCC 23445 / NCTC 10510</strain>
    </source>
</reference>
<comment type="function">
    <text evidence="1">Catalyzes the cyclization of GTP to (8S)-3',8-cyclo-7,8-dihydroguanosine 5'-triphosphate.</text>
</comment>
<comment type="catalytic activity">
    <reaction evidence="1">
        <text>GTP + AH2 + S-adenosyl-L-methionine = (8S)-3',8-cyclo-7,8-dihydroguanosine 5'-triphosphate + 5'-deoxyadenosine + L-methionine + A + H(+)</text>
        <dbReference type="Rhea" id="RHEA:49576"/>
        <dbReference type="ChEBI" id="CHEBI:13193"/>
        <dbReference type="ChEBI" id="CHEBI:15378"/>
        <dbReference type="ChEBI" id="CHEBI:17319"/>
        <dbReference type="ChEBI" id="CHEBI:17499"/>
        <dbReference type="ChEBI" id="CHEBI:37565"/>
        <dbReference type="ChEBI" id="CHEBI:57844"/>
        <dbReference type="ChEBI" id="CHEBI:59789"/>
        <dbReference type="ChEBI" id="CHEBI:131766"/>
        <dbReference type="EC" id="4.1.99.22"/>
    </reaction>
</comment>
<comment type="cofactor">
    <cofactor evidence="1">
        <name>[4Fe-4S] cluster</name>
        <dbReference type="ChEBI" id="CHEBI:49883"/>
    </cofactor>
    <text evidence="1">Binds 2 [4Fe-4S] clusters. Binds 1 [4Fe-4S] cluster coordinated with 3 cysteines and an exchangeable S-adenosyl-L-methionine and 1 [4Fe-4S] cluster coordinated with 3 cysteines and the GTP-derived substrate.</text>
</comment>
<comment type="pathway">
    <text evidence="1">Cofactor biosynthesis; molybdopterin biosynthesis.</text>
</comment>
<comment type="subunit">
    <text evidence="1">Monomer and homodimer.</text>
</comment>
<comment type="similarity">
    <text evidence="1">Belongs to the radical SAM superfamily. MoaA family.</text>
</comment>
<name>MOAA_BRUSI</name>
<organism>
    <name type="scientific">Brucella suis (strain ATCC 23445 / NCTC 10510)</name>
    <dbReference type="NCBI Taxonomy" id="470137"/>
    <lineage>
        <taxon>Bacteria</taxon>
        <taxon>Pseudomonadati</taxon>
        <taxon>Pseudomonadota</taxon>
        <taxon>Alphaproteobacteria</taxon>
        <taxon>Hyphomicrobiales</taxon>
        <taxon>Brucellaceae</taxon>
        <taxon>Brucella/Ochrobactrum group</taxon>
        <taxon>Brucella</taxon>
    </lineage>
</organism>
<feature type="chain" id="PRO_1000085695" description="GTP 3',8-cyclase">
    <location>
        <begin position="1"/>
        <end position="344"/>
    </location>
</feature>
<feature type="domain" description="Radical SAM core" evidence="2">
    <location>
        <begin position="19"/>
        <end position="245"/>
    </location>
</feature>
<feature type="binding site" evidence="1">
    <location>
        <position position="28"/>
    </location>
    <ligand>
        <name>GTP</name>
        <dbReference type="ChEBI" id="CHEBI:37565"/>
    </ligand>
</feature>
<feature type="binding site" evidence="1">
    <location>
        <position position="35"/>
    </location>
    <ligand>
        <name>[4Fe-4S] cluster</name>
        <dbReference type="ChEBI" id="CHEBI:49883"/>
        <label>1</label>
        <note>4Fe-4S-S-AdoMet</note>
    </ligand>
</feature>
<feature type="binding site" evidence="1">
    <location>
        <position position="39"/>
    </location>
    <ligand>
        <name>[4Fe-4S] cluster</name>
        <dbReference type="ChEBI" id="CHEBI:49883"/>
        <label>1</label>
        <note>4Fe-4S-S-AdoMet</note>
    </ligand>
</feature>
<feature type="binding site" evidence="1">
    <location>
        <position position="41"/>
    </location>
    <ligand>
        <name>S-adenosyl-L-methionine</name>
        <dbReference type="ChEBI" id="CHEBI:59789"/>
    </ligand>
</feature>
<feature type="binding site" evidence="1">
    <location>
        <position position="42"/>
    </location>
    <ligand>
        <name>[4Fe-4S] cluster</name>
        <dbReference type="ChEBI" id="CHEBI:49883"/>
        <label>1</label>
        <note>4Fe-4S-S-AdoMet</note>
    </ligand>
</feature>
<feature type="binding site" evidence="1">
    <location>
        <position position="77"/>
    </location>
    <ligand>
        <name>GTP</name>
        <dbReference type="ChEBI" id="CHEBI:37565"/>
    </ligand>
</feature>
<feature type="binding site" evidence="1">
    <location>
        <position position="81"/>
    </location>
    <ligand>
        <name>S-adenosyl-L-methionine</name>
        <dbReference type="ChEBI" id="CHEBI:59789"/>
    </ligand>
</feature>
<feature type="binding site" evidence="1">
    <location>
        <position position="111"/>
    </location>
    <ligand>
        <name>GTP</name>
        <dbReference type="ChEBI" id="CHEBI:37565"/>
    </ligand>
</feature>
<feature type="binding site" evidence="1">
    <location>
        <position position="135"/>
    </location>
    <ligand>
        <name>S-adenosyl-L-methionine</name>
        <dbReference type="ChEBI" id="CHEBI:59789"/>
    </ligand>
</feature>
<feature type="binding site" evidence="1">
    <location>
        <position position="171"/>
    </location>
    <ligand>
        <name>GTP</name>
        <dbReference type="ChEBI" id="CHEBI:37565"/>
    </ligand>
</feature>
<feature type="binding site" evidence="1">
    <location>
        <position position="205"/>
    </location>
    <ligand>
        <name>S-adenosyl-L-methionine</name>
        <dbReference type="ChEBI" id="CHEBI:59789"/>
    </ligand>
</feature>
<feature type="binding site" evidence="1">
    <location>
        <position position="268"/>
    </location>
    <ligand>
        <name>[4Fe-4S] cluster</name>
        <dbReference type="ChEBI" id="CHEBI:49883"/>
        <label>2</label>
        <note>4Fe-4S-substrate</note>
    </ligand>
</feature>
<feature type="binding site" evidence="1">
    <location>
        <position position="271"/>
    </location>
    <ligand>
        <name>[4Fe-4S] cluster</name>
        <dbReference type="ChEBI" id="CHEBI:49883"/>
        <label>2</label>
        <note>4Fe-4S-substrate</note>
    </ligand>
</feature>
<feature type="binding site" evidence="1">
    <location>
        <begin position="273"/>
        <end position="275"/>
    </location>
    <ligand>
        <name>GTP</name>
        <dbReference type="ChEBI" id="CHEBI:37565"/>
    </ligand>
</feature>
<feature type="binding site" evidence="1">
    <location>
        <position position="285"/>
    </location>
    <ligand>
        <name>[4Fe-4S] cluster</name>
        <dbReference type="ChEBI" id="CHEBI:49883"/>
        <label>2</label>
        <note>4Fe-4S-substrate</note>
    </ligand>
</feature>
<protein>
    <recommendedName>
        <fullName evidence="1">GTP 3',8-cyclase</fullName>
        <ecNumber evidence="1">4.1.99.22</ecNumber>
    </recommendedName>
    <alternativeName>
        <fullName evidence="1">Molybdenum cofactor biosynthesis protein A</fullName>
    </alternativeName>
</protein>
<keyword id="KW-0004">4Fe-4S</keyword>
<keyword id="KW-0342">GTP-binding</keyword>
<keyword id="KW-0408">Iron</keyword>
<keyword id="KW-0411">Iron-sulfur</keyword>
<keyword id="KW-0456">Lyase</keyword>
<keyword id="KW-0479">Metal-binding</keyword>
<keyword id="KW-0501">Molybdenum cofactor biosynthesis</keyword>
<keyword id="KW-0547">Nucleotide-binding</keyword>
<keyword id="KW-0949">S-adenosyl-L-methionine</keyword>
<sequence length="344" mass="38603">MRNVQAQPLVSPTEPMIDPFGRAVTYLRVSVTDRCDFRCTYCMAEHMTFLPKKDLLTLEELDRLCSVFIEKGVRKLRLTGGEPLVRKNIMHLIGNLSRHLKSGALDELTLTTNGSQLARFAGELADCGVRRINVSLDTLNPEKFRTITRWGDLSRVLEGIDAAQKAGIHVKINAVALKDFNDAEIPELIRWAHGRGMDVTLIETMPMGEIEFDRTDQYLPLSQVRADLASQFTLADIPYRTGGPARYVTISETGGRLGFITPMTHNFCESCNRVRLTCTGMLYMCLGQNDDADLRKALRESESDEHLSQAIDEAISRKPKGHDFIIDREHNRPSVARHMSLTGG</sequence>